<accession>P75712</accession>
<accession>P77127</accession>
<accession>Q2MBR7</accession>
<sequence>MEHQRKLFQQRGYSEDLLPKTQSQRTWKTFNYFTLWMGSVHNVPNYVMVGGFFILGLSTFSIMLAIILSAFFIAAVMVLNGAAGSKYGVPFAMILRASYGVRGALFPGLLRGGIAAIMWFGLQCYAGSLACLILIGKIWPGFLTLGGDFTLLGLSLPGLITFLIFWLVNVGIGFGGGKVLNKFTAILNPCIYIVFGGMAIWAISLVGIGPIFDYIPSGIQKAENGGFLFLVVINAVVAVWAAPAVSASDFTQNAHSFREQALGQTLGLVVAYILFAVAGVCIIAGASIHYGADTWNVLDIVQRWDSLFASFFAVLVILMTTISTNATGNIIPAGYQIAAIAPTKLTYKNGVLIASIISLLICPWKLMENQDSIYLFLDIIGGMLGPVIGVMMAHYFVVMRGQINLDELYTAPGDYKYYDNGFNLTAFSVTLVAVILSLGGKFIHFMEPLSRVSWFVGVIVAFAAYALLKKRTTAEKTGEQKTIG</sequence>
<protein>
    <recommendedName>
        <fullName evidence="1">Putative allantoin permease</fullName>
    </recommendedName>
    <alternativeName>
        <fullName evidence="1">Allantoin transport protein</fullName>
    </alternativeName>
    <alternativeName>
        <fullName evidence="1">Allantoin transporter</fullName>
    </alternativeName>
</protein>
<proteinExistence type="evidence at protein level"/>
<reference key="1">
    <citation type="journal article" date="1999" name="J. Bacteriol.">
        <title>Genetic analysis of a chromosomal region containing genes required for assimilation of allantoin nitrogen and linked glyoxylate metabolism in Escherichia coli.</title>
        <authorList>
            <person name="Cusa E."/>
            <person name="Obradors N."/>
            <person name="Baldoma L."/>
            <person name="Badia J."/>
            <person name="Aguilar J."/>
        </authorList>
    </citation>
    <scope>NUCLEOTIDE SEQUENCE [GENOMIC DNA]</scope>
    <scope>INDUCTION</scope>
    <source>
        <strain>K12 / ECL1</strain>
    </source>
</reference>
<reference key="2">
    <citation type="submission" date="1997-01" db="EMBL/GenBank/DDBJ databases">
        <title>Sequence of minutes 4-25 of Escherichia coli.</title>
        <authorList>
            <person name="Chung E."/>
            <person name="Allen E."/>
            <person name="Araujo R."/>
            <person name="Aparicio A.M."/>
            <person name="Davis K."/>
            <person name="Duncan M."/>
            <person name="Federspiel N."/>
            <person name="Hyman R."/>
            <person name="Kalman S."/>
            <person name="Komp C."/>
            <person name="Kurdi O."/>
            <person name="Lew H."/>
            <person name="Lin D."/>
            <person name="Namath A."/>
            <person name="Oefner P."/>
            <person name="Roberts D."/>
            <person name="Schramm S."/>
            <person name="Davis R.W."/>
        </authorList>
    </citation>
    <scope>NUCLEOTIDE SEQUENCE [LARGE SCALE GENOMIC DNA]</scope>
    <source>
        <strain>K12 / MG1655 / ATCC 47076</strain>
    </source>
</reference>
<reference key="3">
    <citation type="journal article" date="1997" name="Science">
        <title>The complete genome sequence of Escherichia coli K-12.</title>
        <authorList>
            <person name="Blattner F.R."/>
            <person name="Plunkett G. III"/>
            <person name="Bloch C.A."/>
            <person name="Perna N.T."/>
            <person name="Burland V."/>
            <person name="Riley M."/>
            <person name="Collado-Vides J."/>
            <person name="Glasner J.D."/>
            <person name="Rode C.K."/>
            <person name="Mayhew G.F."/>
            <person name="Gregor J."/>
            <person name="Davis N.W."/>
            <person name="Kirkpatrick H.A."/>
            <person name="Goeden M.A."/>
            <person name="Rose D.J."/>
            <person name="Mau B."/>
            <person name="Shao Y."/>
        </authorList>
    </citation>
    <scope>NUCLEOTIDE SEQUENCE [LARGE SCALE GENOMIC DNA]</scope>
    <source>
        <strain>K12 / MG1655 / ATCC 47076</strain>
    </source>
</reference>
<reference key="4">
    <citation type="journal article" date="2006" name="Mol. Syst. Biol.">
        <title>Highly accurate genome sequences of Escherichia coli K-12 strains MG1655 and W3110.</title>
        <authorList>
            <person name="Hayashi K."/>
            <person name="Morooka N."/>
            <person name="Yamamoto Y."/>
            <person name="Fujita K."/>
            <person name="Isono K."/>
            <person name="Choi S."/>
            <person name="Ohtsubo E."/>
            <person name="Baba T."/>
            <person name="Wanner B.L."/>
            <person name="Mori H."/>
            <person name="Horiuchi T."/>
        </authorList>
    </citation>
    <scope>NUCLEOTIDE SEQUENCE [LARGE SCALE GENOMIC DNA]</scope>
    <source>
        <strain>K12 / W3110 / ATCC 27325 / DSM 5911</strain>
    </source>
</reference>
<reference key="5">
    <citation type="journal article" date="2005" name="Science">
        <title>Global topology analysis of the Escherichia coli inner membrane proteome.</title>
        <authorList>
            <person name="Daley D.O."/>
            <person name="Rapp M."/>
            <person name="Granseth E."/>
            <person name="Melen K."/>
            <person name="Drew D."/>
            <person name="von Heijne G."/>
        </authorList>
    </citation>
    <scope>TOPOLOGY [LARGE SCALE ANALYSIS]</scope>
    <scope>SUBCELLULAR LOCATION</scope>
    <source>
        <strain>K12 / MG1655 / ATCC 47076</strain>
    </source>
</reference>
<name>ALLP_ECOLI</name>
<organism>
    <name type="scientific">Escherichia coli (strain K12)</name>
    <dbReference type="NCBI Taxonomy" id="83333"/>
    <lineage>
        <taxon>Bacteria</taxon>
        <taxon>Pseudomonadati</taxon>
        <taxon>Pseudomonadota</taxon>
        <taxon>Gammaproteobacteria</taxon>
        <taxon>Enterobacterales</taxon>
        <taxon>Enterobacteriaceae</taxon>
        <taxon>Escherichia</taxon>
    </lineage>
</organism>
<feature type="chain" id="PRO_0000197930" description="Putative allantoin permease">
    <location>
        <begin position="1"/>
        <end position="484"/>
    </location>
</feature>
<feature type="topological domain" description="Cytoplasmic" evidence="5">
    <location>
        <begin position="1"/>
        <end position="34"/>
    </location>
</feature>
<feature type="transmembrane region" description="Helical" evidence="2">
    <location>
        <begin position="35"/>
        <end position="55"/>
    </location>
</feature>
<feature type="topological domain" description="Periplasmic" evidence="5">
    <location>
        <begin position="56"/>
        <end position="58"/>
    </location>
</feature>
<feature type="transmembrane region" description="Helical" evidence="2">
    <location>
        <begin position="59"/>
        <end position="79"/>
    </location>
</feature>
<feature type="topological domain" description="Cytoplasmic" evidence="5">
    <location>
        <begin position="80"/>
        <end position="113"/>
    </location>
</feature>
<feature type="transmembrane region" description="Helical" evidence="2">
    <location>
        <begin position="114"/>
        <end position="134"/>
    </location>
</feature>
<feature type="topological domain" description="Periplasmic" evidence="5">
    <location>
        <begin position="135"/>
        <end position="155"/>
    </location>
</feature>
<feature type="transmembrane region" description="Helical" evidence="2">
    <location>
        <begin position="156"/>
        <end position="176"/>
    </location>
</feature>
<feature type="topological domain" description="Cytoplasmic" evidence="5">
    <location>
        <begin position="177"/>
        <end position="190"/>
    </location>
</feature>
<feature type="transmembrane region" description="Helical" evidence="2">
    <location>
        <begin position="191"/>
        <end position="211"/>
    </location>
</feature>
<feature type="topological domain" description="Periplasmic" evidence="5">
    <location>
        <begin position="212"/>
        <end position="224"/>
    </location>
</feature>
<feature type="transmembrane region" description="Helical" evidence="2">
    <location>
        <begin position="225"/>
        <end position="245"/>
    </location>
</feature>
<feature type="topological domain" description="Cytoplasmic" evidence="5">
    <location>
        <begin position="246"/>
        <end position="265"/>
    </location>
</feature>
<feature type="transmembrane region" description="Helical" evidence="2">
    <location>
        <begin position="266"/>
        <end position="286"/>
    </location>
</feature>
<feature type="topological domain" description="Periplasmic" evidence="5">
    <location>
        <begin position="287"/>
        <end position="306"/>
    </location>
</feature>
<feature type="transmembrane region" description="Helical" evidence="2">
    <location>
        <begin position="307"/>
        <end position="327"/>
    </location>
</feature>
<feature type="topological domain" description="Cytoplasmic" evidence="5">
    <location>
        <begin position="328"/>
        <end position="346"/>
    </location>
</feature>
<feature type="transmembrane region" description="Helical" evidence="2">
    <location>
        <begin position="347"/>
        <end position="367"/>
    </location>
</feature>
<feature type="topological domain" description="Periplasmic" evidence="5">
    <location>
        <begin position="368"/>
        <end position="372"/>
    </location>
</feature>
<feature type="transmembrane region" description="Helical" evidence="2">
    <location>
        <begin position="373"/>
        <end position="393"/>
    </location>
</feature>
<feature type="topological domain" description="Cytoplasmic" evidence="5">
    <location>
        <begin position="394"/>
        <end position="425"/>
    </location>
</feature>
<feature type="transmembrane region" description="Helical" evidence="2">
    <location>
        <begin position="426"/>
        <end position="446"/>
    </location>
</feature>
<feature type="topological domain" description="Periplasmic" evidence="5">
    <location>
        <position position="447"/>
    </location>
</feature>
<feature type="transmembrane region" description="Helical" evidence="2">
    <location>
        <begin position="448"/>
        <end position="468"/>
    </location>
</feature>
<feature type="topological domain" description="Cytoplasmic" evidence="4">
    <location>
        <begin position="469"/>
        <end position="484"/>
    </location>
</feature>
<comment type="function">
    <text evidence="1">Uptake of allantoin into the cell.</text>
</comment>
<comment type="catalytic activity">
    <reaction evidence="1">
        <text>(S)-allantoin(in) + H(+)(in) = (S)-allantoin(out) + H(+)(out)</text>
        <dbReference type="Rhea" id="RHEA:28723"/>
        <dbReference type="ChEBI" id="CHEBI:15378"/>
        <dbReference type="ChEBI" id="CHEBI:15678"/>
    </reaction>
    <physiologicalReaction direction="right-to-left" evidence="1">
        <dbReference type="Rhea" id="RHEA:28725"/>
    </physiologicalReaction>
</comment>
<comment type="subcellular location">
    <subcellularLocation>
        <location evidence="4">Cell inner membrane</location>
        <topology evidence="2">Multi-pass membrane protein</topology>
    </subcellularLocation>
</comment>
<comment type="induction">
    <text evidence="3">By glyoxylate.</text>
</comment>
<comment type="similarity">
    <text evidence="5">Belongs to the purine-cytosine permease (2.A.39) family.</text>
</comment>
<evidence type="ECO:0000250" key="1">
    <source>
        <dbReference type="UniProtKB" id="P94575"/>
    </source>
</evidence>
<evidence type="ECO:0000255" key="2"/>
<evidence type="ECO:0000269" key="3">
    <source>
    </source>
</evidence>
<evidence type="ECO:0000269" key="4">
    <source>
    </source>
</evidence>
<evidence type="ECO:0000305" key="5"/>
<gene>
    <name type="primary">ybbW</name>
    <name type="synonym">glxB2</name>
    <name type="ordered locus">b0511</name>
    <name type="ordered locus">JW0499</name>
</gene>
<dbReference type="EMBL" id="U89279">
    <property type="protein sequence ID" value="AAB93852.1"/>
    <property type="molecule type" value="Genomic_DNA"/>
</dbReference>
<dbReference type="EMBL" id="U82664">
    <property type="protein sequence ID" value="AAB40263.1"/>
    <property type="molecule type" value="Genomic_DNA"/>
</dbReference>
<dbReference type="EMBL" id="U00096">
    <property type="protein sequence ID" value="AAC73613.2"/>
    <property type="molecule type" value="Genomic_DNA"/>
</dbReference>
<dbReference type="EMBL" id="AP009048">
    <property type="protein sequence ID" value="BAE76289.1"/>
    <property type="molecule type" value="Genomic_DNA"/>
</dbReference>
<dbReference type="PIR" id="F64782">
    <property type="entry name" value="F64782"/>
</dbReference>
<dbReference type="RefSeq" id="NP_415044.4">
    <property type="nucleotide sequence ID" value="NC_000913.3"/>
</dbReference>
<dbReference type="RefSeq" id="WP_000401100.1">
    <property type="nucleotide sequence ID" value="NZ_SSZK01000024.1"/>
</dbReference>
<dbReference type="SMR" id="P75712"/>
<dbReference type="BioGRID" id="4262820">
    <property type="interactions" value="183"/>
</dbReference>
<dbReference type="FunCoup" id="P75712">
    <property type="interactions" value="382"/>
</dbReference>
<dbReference type="STRING" id="511145.b0511"/>
<dbReference type="TCDB" id="2.A.39.3.8">
    <property type="family name" value="the nucleobase:cation symporter-1 (ncs1) family"/>
</dbReference>
<dbReference type="PaxDb" id="511145-b0511"/>
<dbReference type="EnsemblBacteria" id="AAC73613">
    <property type="protein sequence ID" value="AAC73613"/>
    <property type="gene ID" value="b0511"/>
</dbReference>
<dbReference type="GeneID" id="945138"/>
<dbReference type="KEGG" id="ecj:JW0499"/>
<dbReference type="KEGG" id="eco:b0511"/>
<dbReference type="KEGG" id="ecoc:C3026_02505"/>
<dbReference type="PATRIC" id="fig|1411691.4.peg.1767"/>
<dbReference type="EchoBASE" id="EB3383"/>
<dbReference type="eggNOG" id="COG1953">
    <property type="taxonomic scope" value="Bacteria"/>
</dbReference>
<dbReference type="HOGENOM" id="CLU_021555_0_0_6"/>
<dbReference type="InParanoid" id="P75712"/>
<dbReference type="OMA" id="GWNWRAV"/>
<dbReference type="OrthoDB" id="9780088at2"/>
<dbReference type="PhylomeDB" id="P75712"/>
<dbReference type="BioCyc" id="EcoCyc:B0511-MONOMER"/>
<dbReference type="PRO" id="PR:P75712"/>
<dbReference type="Proteomes" id="UP000000625">
    <property type="component" value="Chromosome"/>
</dbReference>
<dbReference type="GO" id="GO:0005886">
    <property type="term" value="C:plasma membrane"/>
    <property type="evidence" value="ECO:0000314"/>
    <property type="project" value="EcoCyc"/>
</dbReference>
<dbReference type="GO" id="GO:0015205">
    <property type="term" value="F:nucleobase transmembrane transporter activity"/>
    <property type="evidence" value="ECO:0000318"/>
    <property type="project" value="GO_Central"/>
</dbReference>
<dbReference type="GO" id="GO:0015293">
    <property type="term" value="F:symporter activity"/>
    <property type="evidence" value="ECO:0007669"/>
    <property type="project" value="UniProtKB-KW"/>
</dbReference>
<dbReference type="GO" id="GO:0015720">
    <property type="term" value="P:allantoin transport"/>
    <property type="evidence" value="ECO:0000314"/>
    <property type="project" value="EcoCyc"/>
</dbReference>
<dbReference type="GO" id="GO:0015851">
    <property type="term" value="P:nucleobase transport"/>
    <property type="evidence" value="ECO:0000318"/>
    <property type="project" value="GO_Central"/>
</dbReference>
<dbReference type="GO" id="GO:0006144">
    <property type="term" value="P:purine nucleobase metabolic process"/>
    <property type="evidence" value="ECO:0007669"/>
    <property type="project" value="UniProtKB-KW"/>
</dbReference>
<dbReference type="CDD" id="cd11485">
    <property type="entry name" value="SLC-NCS1sbd_YbbW-like"/>
    <property type="match status" value="1"/>
</dbReference>
<dbReference type="FunFam" id="1.10.4160.10:FF:000004">
    <property type="entry name" value="Putative allantoin permease"/>
    <property type="match status" value="1"/>
</dbReference>
<dbReference type="Gene3D" id="1.10.4160.10">
    <property type="entry name" value="Hydantoin permease"/>
    <property type="match status" value="1"/>
</dbReference>
<dbReference type="InterPro" id="IPR012681">
    <property type="entry name" value="NCS1"/>
</dbReference>
<dbReference type="InterPro" id="IPR001248">
    <property type="entry name" value="Pur-cyt_permease"/>
</dbReference>
<dbReference type="InterPro" id="IPR045225">
    <property type="entry name" value="Uracil/uridine/allantoin_perm"/>
</dbReference>
<dbReference type="NCBIfam" id="NF047713">
    <property type="entry name" value="AllantTportGProt"/>
    <property type="match status" value="1"/>
</dbReference>
<dbReference type="NCBIfam" id="TIGR00800">
    <property type="entry name" value="ncs1"/>
    <property type="match status" value="1"/>
</dbReference>
<dbReference type="NCBIfam" id="NF008476">
    <property type="entry name" value="PRK11375.1"/>
    <property type="match status" value="1"/>
</dbReference>
<dbReference type="PANTHER" id="PTHR30618">
    <property type="entry name" value="NCS1 FAMILY PURINE/PYRIMIDINE TRANSPORTER"/>
    <property type="match status" value="1"/>
</dbReference>
<dbReference type="PANTHER" id="PTHR30618:SF0">
    <property type="entry name" value="PURINE-URACIL PERMEASE NCS1"/>
    <property type="match status" value="1"/>
</dbReference>
<dbReference type="Pfam" id="PF02133">
    <property type="entry name" value="Transp_cyt_pur"/>
    <property type="match status" value="1"/>
</dbReference>
<keyword id="KW-0997">Cell inner membrane</keyword>
<keyword id="KW-1003">Cell membrane</keyword>
<keyword id="KW-0472">Membrane</keyword>
<keyword id="KW-0659">Purine metabolism</keyword>
<keyword id="KW-1185">Reference proteome</keyword>
<keyword id="KW-0769">Symport</keyword>
<keyword id="KW-0812">Transmembrane</keyword>
<keyword id="KW-1133">Transmembrane helix</keyword>
<keyword id="KW-0813">Transport</keyword>